<sequence>MRRIGAHVSIAGGIENAPMRAREIGATAFAMFTKNQRQWNAPPLTTQSIDAFKNNCAECGYHARHILPHDSYLINLGSPDPAKLERSRKAFTDEMQRVEALGLSLLNFHPGSHLNETGIDNCLNTIAESVNIALDNSSGVTAVLENTAGQGSNLGHTFEQLAAIIDQIEDKTRVGVCLDTCHLFAAGYDLRTSEAVEATFNEFDSIVSLSYLRGMHLNDAKLDLGSKRDRHESIGSGFIGNDGFAAIIQHPACDEIPLILETPNPDIWNREIEMLYQMEGDKR</sequence>
<accession>B4S3I3</accession>
<comment type="function">
    <text evidence="1">Endonuclease IV plays a role in DNA repair. It cleaves phosphodiester bonds at apurinic or apyrimidinic (AP) sites, generating a 3'-hydroxyl group and a 5'-terminal sugar phosphate.</text>
</comment>
<comment type="catalytic activity">
    <reaction evidence="1">
        <text>Endonucleolytic cleavage to 5'-phosphooligonucleotide end-products.</text>
        <dbReference type="EC" id="3.1.21.2"/>
    </reaction>
</comment>
<comment type="cofactor">
    <cofactor evidence="1">
        <name>Zn(2+)</name>
        <dbReference type="ChEBI" id="CHEBI:29105"/>
    </cofactor>
    <text evidence="1">Binds 3 Zn(2+) ions.</text>
</comment>
<comment type="similarity">
    <text evidence="1">Belongs to the AP endonuclease 2 family.</text>
</comment>
<gene>
    <name evidence="1" type="primary">nfo</name>
    <name type="ordered locus">Paes_1704</name>
</gene>
<keyword id="KW-0227">DNA damage</keyword>
<keyword id="KW-0234">DNA repair</keyword>
<keyword id="KW-0255">Endonuclease</keyword>
<keyword id="KW-0378">Hydrolase</keyword>
<keyword id="KW-0479">Metal-binding</keyword>
<keyword id="KW-0540">Nuclease</keyword>
<keyword id="KW-0862">Zinc</keyword>
<feature type="chain" id="PRO_1000096896" description="Probable endonuclease 4">
    <location>
        <begin position="1"/>
        <end position="283"/>
    </location>
</feature>
<feature type="binding site" evidence="1">
    <location>
        <position position="69"/>
    </location>
    <ligand>
        <name>Zn(2+)</name>
        <dbReference type="ChEBI" id="CHEBI:29105"/>
        <label>1</label>
    </ligand>
</feature>
<feature type="binding site" evidence="1">
    <location>
        <position position="109"/>
    </location>
    <ligand>
        <name>Zn(2+)</name>
        <dbReference type="ChEBI" id="CHEBI:29105"/>
        <label>1</label>
    </ligand>
</feature>
<feature type="binding site" evidence="1">
    <location>
        <position position="145"/>
    </location>
    <ligand>
        <name>Zn(2+)</name>
        <dbReference type="ChEBI" id="CHEBI:29105"/>
        <label>1</label>
    </ligand>
</feature>
<feature type="binding site" evidence="1">
    <location>
        <position position="145"/>
    </location>
    <ligand>
        <name>Zn(2+)</name>
        <dbReference type="ChEBI" id="CHEBI:29105"/>
        <label>2</label>
    </ligand>
</feature>
<feature type="binding site" evidence="1">
    <location>
        <position position="179"/>
    </location>
    <ligand>
        <name>Zn(2+)</name>
        <dbReference type="ChEBI" id="CHEBI:29105"/>
        <label>2</label>
    </ligand>
</feature>
<feature type="binding site" evidence="1">
    <location>
        <position position="182"/>
    </location>
    <ligand>
        <name>Zn(2+)</name>
        <dbReference type="ChEBI" id="CHEBI:29105"/>
        <label>3</label>
    </ligand>
</feature>
<feature type="binding site" evidence="1">
    <location>
        <position position="216"/>
    </location>
    <ligand>
        <name>Zn(2+)</name>
        <dbReference type="ChEBI" id="CHEBI:29105"/>
        <label>2</label>
    </ligand>
</feature>
<feature type="binding site" evidence="1">
    <location>
        <position position="229"/>
    </location>
    <ligand>
        <name>Zn(2+)</name>
        <dbReference type="ChEBI" id="CHEBI:29105"/>
        <label>3</label>
    </ligand>
</feature>
<feature type="binding site" evidence="1">
    <location>
        <position position="231"/>
    </location>
    <ligand>
        <name>Zn(2+)</name>
        <dbReference type="ChEBI" id="CHEBI:29105"/>
        <label>3</label>
    </ligand>
</feature>
<feature type="binding site" evidence="1">
    <location>
        <position position="261"/>
    </location>
    <ligand>
        <name>Zn(2+)</name>
        <dbReference type="ChEBI" id="CHEBI:29105"/>
        <label>2</label>
    </ligand>
</feature>
<evidence type="ECO:0000255" key="1">
    <source>
        <dbReference type="HAMAP-Rule" id="MF_00152"/>
    </source>
</evidence>
<proteinExistence type="inferred from homology"/>
<protein>
    <recommendedName>
        <fullName evidence="1">Probable endonuclease 4</fullName>
        <ecNumber evidence="1">3.1.21.2</ecNumber>
    </recommendedName>
    <alternativeName>
        <fullName evidence="1">Endodeoxyribonuclease IV</fullName>
    </alternativeName>
    <alternativeName>
        <fullName evidence="1">Endonuclease IV</fullName>
    </alternativeName>
</protein>
<dbReference type="EC" id="3.1.21.2" evidence="1"/>
<dbReference type="EMBL" id="CP001108">
    <property type="protein sequence ID" value="ACF46722.1"/>
    <property type="molecule type" value="Genomic_DNA"/>
</dbReference>
<dbReference type="RefSeq" id="WP_012506255.1">
    <property type="nucleotide sequence ID" value="NC_011059.1"/>
</dbReference>
<dbReference type="SMR" id="B4S3I3"/>
<dbReference type="STRING" id="290512.Paes_1704"/>
<dbReference type="KEGG" id="paa:Paes_1704"/>
<dbReference type="eggNOG" id="COG0648">
    <property type="taxonomic scope" value="Bacteria"/>
</dbReference>
<dbReference type="HOGENOM" id="CLU_025885_0_4_10"/>
<dbReference type="Proteomes" id="UP000002725">
    <property type="component" value="Chromosome"/>
</dbReference>
<dbReference type="GO" id="GO:0008833">
    <property type="term" value="F:deoxyribonuclease IV (phage-T4-induced) activity"/>
    <property type="evidence" value="ECO:0007669"/>
    <property type="project" value="UniProtKB-UniRule"/>
</dbReference>
<dbReference type="GO" id="GO:0003677">
    <property type="term" value="F:DNA binding"/>
    <property type="evidence" value="ECO:0007669"/>
    <property type="project" value="InterPro"/>
</dbReference>
<dbReference type="GO" id="GO:0003906">
    <property type="term" value="F:DNA-(apurinic or apyrimidinic site) endonuclease activity"/>
    <property type="evidence" value="ECO:0007669"/>
    <property type="project" value="TreeGrafter"/>
</dbReference>
<dbReference type="GO" id="GO:0008081">
    <property type="term" value="F:phosphoric diester hydrolase activity"/>
    <property type="evidence" value="ECO:0007669"/>
    <property type="project" value="TreeGrafter"/>
</dbReference>
<dbReference type="GO" id="GO:0008270">
    <property type="term" value="F:zinc ion binding"/>
    <property type="evidence" value="ECO:0007669"/>
    <property type="project" value="UniProtKB-UniRule"/>
</dbReference>
<dbReference type="GO" id="GO:0006284">
    <property type="term" value="P:base-excision repair"/>
    <property type="evidence" value="ECO:0007669"/>
    <property type="project" value="TreeGrafter"/>
</dbReference>
<dbReference type="CDD" id="cd00019">
    <property type="entry name" value="AP2Ec"/>
    <property type="match status" value="1"/>
</dbReference>
<dbReference type="FunFam" id="3.20.20.150:FF:000001">
    <property type="entry name" value="Probable endonuclease 4"/>
    <property type="match status" value="1"/>
</dbReference>
<dbReference type="Gene3D" id="3.20.20.150">
    <property type="entry name" value="Divalent-metal-dependent TIM barrel enzymes"/>
    <property type="match status" value="1"/>
</dbReference>
<dbReference type="HAMAP" id="MF_00152">
    <property type="entry name" value="Nfo"/>
    <property type="match status" value="1"/>
</dbReference>
<dbReference type="InterPro" id="IPR001719">
    <property type="entry name" value="AP_endonuc_2"/>
</dbReference>
<dbReference type="InterPro" id="IPR018246">
    <property type="entry name" value="AP_endonuc_F2_Zn_BS"/>
</dbReference>
<dbReference type="InterPro" id="IPR036237">
    <property type="entry name" value="Xyl_isomerase-like_sf"/>
</dbReference>
<dbReference type="InterPro" id="IPR013022">
    <property type="entry name" value="Xyl_isomerase-like_TIM-brl"/>
</dbReference>
<dbReference type="NCBIfam" id="TIGR00587">
    <property type="entry name" value="nfo"/>
    <property type="match status" value="1"/>
</dbReference>
<dbReference type="NCBIfam" id="NF002199">
    <property type="entry name" value="PRK01060.1-4"/>
    <property type="match status" value="1"/>
</dbReference>
<dbReference type="PANTHER" id="PTHR21445:SF0">
    <property type="entry name" value="APURINIC-APYRIMIDINIC ENDONUCLEASE"/>
    <property type="match status" value="1"/>
</dbReference>
<dbReference type="PANTHER" id="PTHR21445">
    <property type="entry name" value="ENDONUCLEASE IV ENDODEOXYRIBONUCLEASE IV"/>
    <property type="match status" value="1"/>
</dbReference>
<dbReference type="Pfam" id="PF01261">
    <property type="entry name" value="AP_endonuc_2"/>
    <property type="match status" value="1"/>
</dbReference>
<dbReference type="SMART" id="SM00518">
    <property type="entry name" value="AP2Ec"/>
    <property type="match status" value="1"/>
</dbReference>
<dbReference type="SUPFAM" id="SSF51658">
    <property type="entry name" value="Xylose isomerase-like"/>
    <property type="match status" value="1"/>
</dbReference>
<dbReference type="PROSITE" id="PS00729">
    <property type="entry name" value="AP_NUCLEASE_F2_1"/>
    <property type="match status" value="1"/>
</dbReference>
<dbReference type="PROSITE" id="PS00730">
    <property type="entry name" value="AP_NUCLEASE_F2_2"/>
    <property type="match status" value="1"/>
</dbReference>
<dbReference type="PROSITE" id="PS00731">
    <property type="entry name" value="AP_NUCLEASE_F2_3"/>
    <property type="match status" value="1"/>
</dbReference>
<dbReference type="PROSITE" id="PS51432">
    <property type="entry name" value="AP_NUCLEASE_F2_4"/>
    <property type="match status" value="1"/>
</dbReference>
<name>END4_PROA2</name>
<organism>
    <name type="scientific">Prosthecochloris aestuarii (strain DSM 271 / SK 413)</name>
    <dbReference type="NCBI Taxonomy" id="290512"/>
    <lineage>
        <taxon>Bacteria</taxon>
        <taxon>Pseudomonadati</taxon>
        <taxon>Chlorobiota</taxon>
        <taxon>Chlorobiia</taxon>
        <taxon>Chlorobiales</taxon>
        <taxon>Chlorobiaceae</taxon>
        <taxon>Prosthecochloris</taxon>
    </lineage>
</organism>
<reference key="1">
    <citation type="submission" date="2008-06" db="EMBL/GenBank/DDBJ databases">
        <title>Complete sequence of chromosome of Prosthecochloris aestuarii DSM 271.</title>
        <authorList>
            <consortium name="US DOE Joint Genome Institute"/>
            <person name="Lucas S."/>
            <person name="Copeland A."/>
            <person name="Lapidus A."/>
            <person name="Glavina del Rio T."/>
            <person name="Dalin E."/>
            <person name="Tice H."/>
            <person name="Bruce D."/>
            <person name="Goodwin L."/>
            <person name="Pitluck S."/>
            <person name="Schmutz J."/>
            <person name="Larimer F."/>
            <person name="Land M."/>
            <person name="Hauser L."/>
            <person name="Kyrpides N."/>
            <person name="Anderson I."/>
            <person name="Liu Z."/>
            <person name="Li T."/>
            <person name="Zhao F."/>
            <person name="Overmann J."/>
            <person name="Bryant D.A."/>
            <person name="Richardson P."/>
        </authorList>
    </citation>
    <scope>NUCLEOTIDE SEQUENCE [LARGE SCALE GENOMIC DNA]</scope>
    <source>
        <strain>DSM 271 / SK 413</strain>
    </source>
</reference>